<keyword id="KW-0007">Acetylation</keyword>
<keyword id="KW-0041">Annexin</keyword>
<keyword id="KW-0094">Blood coagulation</keyword>
<keyword id="KW-0106">Calcium</keyword>
<keyword id="KW-0111">Calcium/phospholipid-binding</keyword>
<keyword id="KW-0356">Hemostasis</keyword>
<keyword id="KW-1017">Isopeptide bond</keyword>
<keyword id="KW-0597">Phosphoprotein</keyword>
<keyword id="KW-1185">Reference proteome</keyword>
<keyword id="KW-0677">Repeat</keyword>
<keyword id="KW-0702">S-nitrosylation</keyword>
<keyword id="KW-0832">Ubl conjugation</keyword>
<reference key="1">
    <citation type="submission" date="2005-06" db="EMBL/GenBank/DDBJ databases">
        <title>DNA sequences of macaque genes expressed in brain or testis and its evolutionary implications.</title>
        <authorList>
            <consortium name="International consortium for macaque cDNA sequencing and analysis"/>
        </authorList>
    </citation>
    <scope>NUCLEOTIDE SEQUENCE [LARGE SCALE MRNA]</scope>
    <source>
        <tissue>Parietal cortex</tissue>
    </source>
</reference>
<name>ANXA5_MACFA</name>
<organism>
    <name type="scientific">Macaca fascicularis</name>
    <name type="common">Crab-eating macaque</name>
    <name type="synonym">Cynomolgus monkey</name>
    <dbReference type="NCBI Taxonomy" id="9541"/>
    <lineage>
        <taxon>Eukaryota</taxon>
        <taxon>Metazoa</taxon>
        <taxon>Chordata</taxon>
        <taxon>Craniata</taxon>
        <taxon>Vertebrata</taxon>
        <taxon>Euteleostomi</taxon>
        <taxon>Mammalia</taxon>
        <taxon>Eutheria</taxon>
        <taxon>Euarchontoglires</taxon>
        <taxon>Primates</taxon>
        <taxon>Haplorrhini</taxon>
        <taxon>Catarrhini</taxon>
        <taxon>Cercopithecidae</taxon>
        <taxon>Cercopithecinae</taxon>
        <taxon>Macaca</taxon>
    </lineage>
</organism>
<dbReference type="EMBL" id="AB169917">
    <property type="protein sequence ID" value="BAE01998.1"/>
    <property type="molecule type" value="mRNA"/>
</dbReference>
<dbReference type="RefSeq" id="NP_001270160.1">
    <property type="nucleotide sequence ID" value="NM_001283231.1"/>
</dbReference>
<dbReference type="RefSeq" id="XP_045248763.1">
    <property type="nucleotide sequence ID" value="XM_045392828.2"/>
</dbReference>
<dbReference type="SMR" id="Q4R4H7"/>
<dbReference type="STRING" id="9541.ENSMFAP00000045095"/>
<dbReference type="GeneID" id="101926167"/>
<dbReference type="VEuPathDB" id="HostDB:ENSMFAG00000045853"/>
<dbReference type="eggNOG" id="KOG0819">
    <property type="taxonomic scope" value="Eukaryota"/>
</dbReference>
<dbReference type="Proteomes" id="UP000233100">
    <property type="component" value="Chromosome 5"/>
</dbReference>
<dbReference type="GO" id="GO:0005737">
    <property type="term" value="C:cytoplasm"/>
    <property type="evidence" value="ECO:0007669"/>
    <property type="project" value="TreeGrafter"/>
</dbReference>
<dbReference type="GO" id="GO:0005634">
    <property type="term" value="C:nucleus"/>
    <property type="evidence" value="ECO:0007669"/>
    <property type="project" value="TreeGrafter"/>
</dbReference>
<dbReference type="GO" id="GO:0005886">
    <property type="term" value="C:plasma membrane"/>
    <property type="evidence" value="ECO:0007669"/>
    <property type="project" value="TreeGrafter"/>
</dbReference>
<dbReference type="GO" id="GO:0012506">
    <property type="term" value="C:vesicle membrane"/>
    <property type="evidence" value="ECO:0007669"/>
    <property type="project" value="TreeGrafter"/>
</dbReference>
<dbReference type="GO" id="GO:0005509">
    <property type="term" value="F:calcium ion binding"/>
    <property type="evidence" value="ECO:0007669"/>
    <property type="project" value="InterPro"/>
</dbReference>
<dbReference type="GO" id="GO:0005544">
    <property type="term" value="F:calcium-dependent phospholipid binding"/>
    <property type="evidence" value="ECO:0007669"/>
    <property type="project" value="UniProtKB-KW"/>
</dbReference>
<dbReference type="GO" id="GO:0001786">
    <property type="term" value="F:phosphatidylserine binding"/>
    <property type="evidence" value="ECO:0007669"/>
    <property type="project" value="TreeGrafter"/>
</dbReference>
<dbReference type="GO" id="GO:0007596">
    <property type="term" value="P:blood coagulation"/>
    <property type="evidence" value="ECO:0007669"/>
    <property type="project" value="UniProtKB-KW"/>
</dbReference>
<dbReference type="GO" id="GO:0050819">
    <property type="term" value="P:negative regulation of coagulation"/>
    <property type="evidence" value="ECO:0007669"/>
    <property type="project" value="InterPro"/>
</dbReference>
<dbReference type="FunFam" id="1.10.220.10:FF:000002">
    <property type="entry name" value="Annexin"/>
    <property type="match status" value="1"/>
</dbReference>
<dbReference type="FunFam" id="1.10.220.10:FF:000003">
    <property type="entry name" value="Annexin"/>
    <property type="match status" value="1"/>
</dbReference>
<dbReference type="FunFam" id="1.10.220.10:FF:000004">
    <property type="entry name" value="Annexin"/>
    <property type="match status" value="1"/>
</dbReference>
<dbReference type="FunFam" id="1.10.220.10:FF:000022">
    <property type="entry name" value="Annexin A5"/>
    <property type="match status" value="1"/>
</dbReference>
<dbReference type="Gene3D" id="1.10.220.10">
    <property type="entry name" value="Annexin"/>
    <property type="match status" value="4"/>
</dbReference>
<dbReference type="InterPro" id="IPR001464">
    <property type="entry name" value="Annexin"/>
</dbReference>
<dbReference type="InterPro" id="IPR018502">
    <property type="entry name" value="Annexin_repeat"/>
</dbReference>
<dbReference type="InterPro" id="IPR018252">
    <property type="entry name" value="Annexin_repeat_CS"/>
</dbReference>
<dbReference type="InterPro" id="IPR037104">
    <property type="entry name" value="Annexin_sf"/>
</dbReference>
<dbReference type="InterPro" id="IPR002392">
    <property type="entry name" value="ANX5"/>
</dbReference>
<dbReference type="PANTHER" id="PTHR10502">
    <property type="entry name" value="ANNEXIN"/>
    <property type="match status" value="1"/>
</dbReference>
<dbReference type="PANTHER" id="PTHR10502:SF26">
    <property type="entry name" value="ANNEXIN A5"/>
    <property type="match status" value="1"/>
</dbReference>
<dbReference type="Pfam" id="PF00191">
    <property type="entry name" value="Annexin"/>
    <property type="match status" value="4"/>
</dbReference>
<dbReference type="PRINTS" id="PR00196">
    <property type="entry name" value="ANNEXIN"/>
</dbReference>
<dbReference type="PRINTS" id="PR00201">
    <property type="entry name" value="ANNEXINV"/>
</dbReference>
<dbReference type="SMART" id="SM00335">
    <property type="entry name" value="ANX"/>
    <property type="match status" value="4"/>
</dbReference>
<dbReference type="SUPFAM" id="SSF47874">
    <property type="entry name" value="Annexin"/>
    <property type="match status" value="1"/>
</dbReference>
<dbReference type="PROSITE" id="PS00223">
    <property type="entry name" value="ANNEXIN_1"/>
    <property type="match status" value="4"/>
</dbReference>
<dbReference type="PROSITE" id="PS51897">
    <property type="entry name" value="ANNEXIN_2"/>
    <property type="match status" value="4"/>
</dbReference>
<sequence>MAQVLRGTVTDFPGFDERADAETLRKAMKGLGTDEESILTLLTSRSNAQRQEISAAFKTLFGRDLLDDLKSELTGKFEKLIVALMKPSRLYDAYELKHALKGAGTDEKVLTEIIASRTPEELRAIKEVYEEEYGSSLEDDVVGDTSGYYQRMLVVLLQANRDPDAGIDEAQVEQDAQALFQAGELKWGTDEEKFITIFGTRSVSHLRKVFDKYMTISGFQIEETIDRETSGNLEQLLLAVVKSIRSIPAYLAETLYYAMKGAGTDDHTLIRVMVSRSEIDLLNIRKEFRKNFATSLYSMIKGDTSGDYKKALLLLCGGED</sequence>
<feature type="initiator methionine" description="Removed" evidence="4">
    <location>
        <position position="1"/>
    </location>
</feature>
<feature type="chain" id="PRO_0000252671" description="Annexin A5">
    <location>
        <begin position="2"/>
        <end position="320"/>
    </location>
</feature>
<feature type="repeat" description="Annexin 1" evidence="5">
    <location>
        <begin position="15"/>
        <end position="86"/>
    </location>
</feature>
<feature type="repeat" description="Annexin 2" evidence="5">
    <location>
        <begin position="87"/>
        <end position="158"/>
    </location>
</feature>
<feature type="repeat" description="Annexin 3" evidence="5">
    <location>
        <begin position="170"/>
        <end position="242"/>
    </location>
</feature>
<feature type="repeat" description="Annexin 4" evidence="5">
    <location>
        <begin position="246"/>
        <end position="317"/>
    </location>
</feature>
<feature type="short sequence motif" description="[IL]-x-C-x-x-[DE] motif" evidence="2">
    <location>
        <begin position="314"/>
        <end position="320"/>
    </location>
</feature>
<feature type="modified residue" description="N-acetylalanine" evidence="4">
    <location>
        <position position="2"/>
    </location>
</feature>
<feature type="modified residue" description="Phosphoserine" evidence="3">
    <location>
        <position position="37"/>
    </location>
</feature>
<feature type="modified residue" description="N6-acetyllysine" evidence="2">
    <location>
        <position position="70"/>
    </location>
</feature>
<feature type="modified residue" description="N6-acetyllysine" evidence="2">
    <location>
        <position position="76"/>
    </location>
</feature>
<feature type="modified residue" description="N6-acetyllysine" evidence="2">
    <location>
        <position position="79"/>
    </location>
</feature>
<feature type="modified residue" description="N6-acetyllysine" evidence="2">
    <location>
        <position position="97"/>
    </location>
</feature>
<feature type="modified residue" description="N6-acetyllysine" evidence="2">
    <location>
        <position position="101"/>
    </location>
</feature>
<feature type="modified residue" description="N6-succinyllysine" evidence="3">
    <location>
        <position position="290"/>
    </location>
</feature>
<feature type="cross-link" description="Glycyl lysine isopeptide (Lys-Gly) (interchain with G-Cter in SUMO1); alternate" evidence="2">
    <location>
        <position position="29"/>
    </location>
</feature>
<feature type="cross-link" description="Glycyl lysine isopeptide (Lys-Gly) (interchain with G-Cter in SUMO2); alternate" evidence="2">
    <location>
        <position position="29"/>
    </location>
</feature>
<accession>Q4R4H7</accession>
<protein>
    <recommendedName>
        <fullName>Annexin A5</fullName>
    </recommendedName>
    <alternativeName>
        <fullName>Annexin V</fullName>
    </alternativeName>
    <alternativeName>
        <fullName>Annexin-5</fullName>
    </alternativeName>
</protein>
<gene>
    <name type="primary">ANXA5</name>
    <name type="ORF">QnpA-14191</name>
</gene>
<evidence type="ECO:0000250" key="1"/>
<evidence type="ECO:0000250" key="2">
    <source>
        <dbReference type="UniProtKB" id="P08758"/>
    </source>
</evidence>
<evidence type="ECO:0000250" key="3">
    <source>
        <dbReference type="UniProtKB" id="P48036"/>
    </source>
</evidence>
<evidence type="ECO:0000250" key="4">
    <source>
        <dbReference type="UniProtKB" id="P81287"/>
    </source>
</evidence>
<evidence type="ECO:0000255" key="5">
    <source>
        <dbReference type="PROSITE-ProRule" id="PRU01245"/>
    </source>
</evidence>
<evidence type="ECO:0000305" key="6"/>
<proteinExistence type="evidence at transcript level"/>
<comment type="function">
    <text evidence="1">This protein is an anticoagulant protein that acts as an indirect inhibitor of the thromboplastin-specific complex, which is involved in the blood coagulation cascade.</text>
</comment>
<comment type="subunit">
    <text evidence="1">Monomer. Binds ATRX and EIF5B (By similarity).</text>
</comment>
<comment type="domain">
    <text>A pair of annexin repeats may form one binding site for calcium and phospholipid.</text>
</comment>
<comment type="domain">
    <text evidence="2">The [IL]-x-C-x-x-[DE] motif is a proposed target motif for cysteine S-nitrosylation mediated by the iNOS-S100A8/A9 transnitrosylase complex.</text>
</comment>
<comment type="PTM">
    <text evidence="2">S-nitrosylation is induced by interferon-gamma and oxidatively-modified low-densitity lipoprotein (LDL(ox)) possibly implicating the iNOS-S100A8/9 transnitrosylase complex.</text>
</comment>
<comment type="similarity">
    <text evidence="5 6">Belongs to the annexin family.</text>
</comment>